<accession>Q10408</accession>
<dbReference type="EMBL" id="CU329670">
    <property type="protein sequence ID" value="CAA94621.1"/>
    <property type="molecule type" value="Genomic_DNA"/>
</dbReference>
<dbReference type="PIR" id="T38074">
    <property type="entry name" value="T38074"/>
</dbReference>
<dbReference type="SMR" id="Q10408"/>
<dbReference type="BioGRID" id="278836">
    <property type="interactions" value="21"/>
</dbReference>
<dbReference type="FunCoup" id="Q10408">
    <property type="interactions" value="36"/>
</dbReference>
<dbReference type="STRING" id="284812.Q10408"/>
<dbReference type="iPTMnet" id="Q10408"/>
<dbReference type="PaxDb" id="4896-SPAC1F3.03.1"/>
<dbReference type="EnsemblFungi" id="SPAC1F3.03.1">
    <property type="protein sequence ID" value="SPAC1F3.03.1:pep"/>
    <property type="gene ID" value="SPAC1F3.03"/>
</dbReference>
<dbReference type="KEGG" id="spo:2542372"/>
<dbReference type="PomBase" id="SPAC1F3.03"/>
<dbReference type="VEuPathDB" id="FungiDB:SPAC1F3.03"/>
<dbReference type="eggNOG" id="KOG1983">
    <property type="taxonomic scope" value="Eukaryota"/>
</dbReference>
<dbReference type="HOGENOM" id="CLU_006030_0_0_1"/>
<dbReference type="InParanoid" id="Q10408"/>
<dbReference type="OMA" id="QIYVFGQ"/>
<dbReference type="PhylomeDB" id="Q10408"/>
<dbReference type="PRO" id="PR:Q10408"/>
<dbReference type="Proteomes" id="UP000002485">
    <property type="component" value="Chromosome I"/>
</dbReference>
<dbReference type="GO" id="GO:0032153">
    <property type="term" value="C:cell division site"/>
    <property type="evidence" value="ECO:0007005"/>
    <property type="project" value="PomBase"/>
</dbReference>
<dbReference type="GO" id="GO:0051286">
    <property type="term" value="C:cell tip"/>
    <property type="evidence" value="ECO:0007005"/>
    <property type="project" value="PomBase"/>
</dbReference>
<dbReference type="GO" id="GO:0005737">
    <property type="term" value="C:cytoplasm"/>
    <property type="evidence" value="ECO:0000318"/>
    <property type="project" value="GO_Central"/>
</dbReference>
<dbReference type="GO" id="GO:0005886">
    <property type="term" value="C:plasma membrane"/>
    <property type="evidence" value="ECO:0000266"/>
    <property type="project" value="PomBase"/>
</dbReference>
<dbReference type="GO" id="GO:0005096">
    <property type="term" value="F:GTPase activator activity"/>
    <property type="evidence" value="ECO:0000318"/>
    <property type="project" value="GO_Central"/>
</dbReference>
<dbReference type="GO" id="GO:0045159">
    <property type="term" value="F:myosin II binding"/>
    <property type="evidence" value="ECO:0000318"/>
    <property type="project" value="GO_Central"/>
</dbReference>
<dbReference type="GO" id="GO:0031267">
    <property type="term" value="F:small GTPase binding"/>
    <property type="evidence" value="ECO:0000266"/>
    <property type="project" value="PomBase"/>
</dbReference>
<dbReference type="GO" id="GO:0000149">
    <property type="term" value="F:SNARE binding"/>
    <property type="evidence" value="ECO:0000266"/>
    <property type="project" value="PomBase"/>
</dbReference>
<dbReference type="GO" id="GO:0019905">
    <property type="term" value="F:syntaxin binding"/>
    <property type="evidence" value="ECO:0000318"/>
    <property type="project" value="GO_Central"/>
</dbReference>
<dbReference type="GO" id="GO:0030010">
    <property type="term" value="P:establishment of cell polarity"/>
    <property type="evidence" value="ECO:0000266"/>
    <property type="project" value="PomBase"/>
</dbReference>
<dbReference type="GO" id="GO:0006887">
    <property type="term" value="P:exocytosis"/>
    <property type="evidence" value="ECO:0000266"/>
    <property type="project" value="PomBase"/>
</dbReference>
<dbReference type="GO" id="GO:0006893">
    <property type="term" value="P:Golgi to plasma membrane transport"/>
    <property type="evidence" value="ECO:0000266"/>
    <property type="project" value="PomBase"/>
</dbReference>
<dbReference type="Gene3D" id="2.130.10.10">
    <property type="entry name" value="YVTN repeat-like/Quinoprotein amine dehydrogenase"/>
    <property type="match status" value="1"/>
</dbReference>
<dbReference type="InterPro" id="IPR013905">
    <property type="entry name" value="Lgl_C_dom"/>
</dbReference>
<dbReference type="InterPro" id="IPR015943">
    <property type="entry name" value="WD40/YVTN_repeat-like_dom_sf"/>
</dbReference>
<dbReference type="InterPro" id="IPR036322">
    <property type="entry name" value="WD40_repeat_dom_sf"/>
</dbReference>
<dbReference type="PANTHER" id="PTHR10241">
    <property type="entry name" value="LETHAL 2 GIANT LARVAE PROTEIN"/>
    <property type="match status" value="1"/>
</dbReference>
<dbReference type="PANTHER" id="PTHR10241:SF25">
    <property type="entry name" value="TOMOSYN, ISOFORM C"/>
    <property type="match status" value="1"/>
</dbReference>
<dbReference type="Pfam" id="PF08596">
    <property type="entry name" value="Lgl_C"/>
    <property type="match status" value="1"/>
</dbReference>
<dbReference type="SUPFAM" id="SSF69322">
    <property type="entry name" value="Tricorn protease domain 2"/>
    <property type="match status" value="1"/>
</dbReference>
<dbReference type="SUPFAM" id="SSF50978">
    <property type="entry name" value="WD40 repeat-like"/>
    <property type="match status" value="1"/>
</dbReference>
<protein>
    <recommendedName>
        <fullName>Uncharacterized protein C1F3.03</fullName>
    </recommendedName>
</protein>
<comment type="subcellular location">
    <subcellularLocation>
        <location evidence="2">Membrane</location>
        <topology evidence="2">Multi-pass membrane protein</topology>
    </subcellularLocation>
</comment>
<comment type="similarity">
    <text evidence="2">To yeast YPR031w.</text>
</comment>
<evidence type="ECO:0000255" key="1"/>
<evidence type="ECO:0000305" key="2"/>
<proteinExistence type="predicted"/>
<gene>
    <name type="ORF">SPAC1F3.03</name>
</gene>
<feature type="chain" id="PRO_0000116596" description="Uncharacterized protein C1F3.03">
    <location>
        <begin position="1"/>
        <end position="1004"/>
    </location>
</feature>
<feature type="transmembrane region" description="Helical" evidence="1">
    <location>
        <begin position="38"/>
        <end position="58"/>
    </location>
</feature>
<feature type="transmembrane region" description="Helical" evidence="1">
    <location>
        <begin position="77"/>
        <end position="97"/>
    </location>
</feature>
<feature type="transmembrane region" description="Helical" evidence="1">
    <location>
        <begin position="188"/>
        <end position="208"/>
    </location>
</feature>
<feature type="transmembrane region" description="Helical" evidence="1">
    <location>
        <begin position="324"/>
        <end position="344"/>
    </location>
</feature>
<feature type="transmembrane region" description="Helical" evidence="1">
    <location>
        <begin position="422"/>
        <end position="442"/>
    </location>
</feature>
<feature type="transmembrane region" description="Helical" evidence="1">
    <location>
        <begin position="599"/>
        <end position="619"/>
    </location>
</feature>
<feature type="transmembrane region" description="Helical" evidence="1">
    <location>
        <begin position="726"/>
        <end position="746"/>
    </location>
</feature>
<feature type="transmembrane region" description="Helical" evidence="1">
    <location>
        <begin position="823"/>
        <end position="843"/>
    </location>
</feature>
<feature type="glycosylation site" description="N-linked (GlcNAc...) asparagine" evidence="1">
    <location>
        <position position="27"/>
    </location>
</feature>
<feature type="glycosylation site" description="N-linked (GlcNAc...) asparagine" evidence="1">
    <location>
        <position position="392"/>
    </location>
</feature>
<feature type="glycosylation site" description="N-linked (GlcNAc...) asparagine" evidence="1">
    <location>
        <position position="418"/>
    </location>
</feature>
<feature type="glycosylation site" description="N-linked (GlcNAc...) asparagine" evidence="1">
    <location>
        <position position="421"/>
    </location>
</feature>
<feature type="glycosylation site" description="N-linked (GlcNAc...) asparagine" evidence="1">
    <location>
        <position position="627"/>
    </location>
</feature>
<feature type="glycosylation site" description="N-linked (GlcNAc...) asparagine" evidence="1">
    <location>
        <position position="859"/>
    </location>
</feature>
<reference key="1">
    <citation type="journal article" date="2002" name="Nature">
        <title>The genome sequence of Schizosaccharomyces pombe.</title>
        <authorList>
            <person name="Wood V."/>
            <person name="Gwilliam R."/>
            <person name="Rajandream M.A."/>
            <person name="Lyne M.H."/>
            <person name="Lyne R."/>
            <person name="Stewart A."/>
            <person name="Sgouros J.G."/>
            <person name="Peat N."/>
            <person name="Hayles J."/>
            <person name="Baker S.G."/>
            <person name="Basham D."/>
            <person name="Bowman S."/>
            <person name="Brooks K."/>
            <person name="Brown D."/>
            <person name="Brown S."/>
            <person name="Chillingworth T."/>
            <person name="Churcher C.M."/>
            <person name="Collins M."/>
            <person name="Connor R."/>
            <person name="Cronin A."/>
            <person name="Davis P."/>
            <person name="Feltwell T."/>
            <person name="Fraser A."/>
            <person name="Gentles S."/>
            <person name="Goble A."/>
            <person name="Hamlin N."/>
            <person name="Harris D.E."/>
            <person name="Hidalgo J."/>
            <person name="Hodgson G."/>
            <person name="Holroyd S."/>
            <person name="Hornsby T."/>
            <person name="Howarth S."/>
            <person name="Huckle E.J."/>
            <person name="Hunt S."/>
            <person name="Jagels K."/>
            <person name="James K.D."/>
            <person name="Jones L."/>
            <person name="Jones M."/>
            <person name="Leather S."/>
            <person name="McDonald S."/>
            <person name="McLean J."/>
            <person name="Mooney P."/>
            <person name="Moule S."/>
            <person name="Mungall K.L."/>
            <person name="Murphy L.D."/>
            <person name="Niblett D."/>
            <person name="Odell C."/>
            <person name="Oliver K."/>
            <person name="O'Neil S."/>
            <person name="Pearson D."/>
            <person name="Quail M.A."/>
            <person name="Rabbinowitsch E."/>
            <person name="Rutherford K.M."/>
            <person name="Rutter S."/>
            <person name="Saunders D."/>
            <person name="Seeger K."/>
            <person name="Sharp S."/>
            <person name="Skelton J."/>
            <person name="Simmonds M.N."/>
            <person name="Squares R."/>
            <person name="Squares S."/>
            <person name="Stevens K."/>
            <person name="Taylor K."/>
            <person name="Taylor R.G."/>
            <person name="Tivey A."/>
            <person name="Walsh S.V."/>
            <person name="Warren T."/>
            <person name="Whitehead S."/>
            <person name="Woodward J.R."/>
            <person name="Volckaert G."/>
            <person name="Aert R."/>
            <person name="Robben J."/>
            <person name="Grymonprez B."/>
            <person name="Weltjens I."/>
            <person name="Vanstreels E."/>
            <person name="Rieger M."/>
            <person name="Schaefer M."/>
            <person name="Mueller-Auer S."/>
            <person name="Gabel C."/>
            <person name="Fuchs M."/>
            <person name="Duesterhoeft A."/>
            <person name="Fritzc C."/>
            <person name="Holzer E."/>
            <person name="Moestl D."/>
            <person name="Hilbert H."/>
            <person name="Borzym K."/>
            <person name="Langer I."/>
            <person name="Beck A."/>
            <person name="Lehrach H."/>
            <person name="Reinhardt R."/>
            <person name="Pohl T.M."/>
            <person name="Eger P."/>
            <person name="Zimmermann W."/>
            <person name="Wedler H."/>
            <person name="Wambutt R."/>
            <person name="Purnelle B."/>
            <person name="Goffeau A."/>
            <person name="Cadieu E."/>
            <person name="Dreano S."/>
            <person name="Gloux S."/>
            <person name="Lelaure V."/>
            <person name="Mottier S."/>
            <person name="Galibert F."/>
            <person name="Aves S.J."/>
            <person name="Xiang Z."/>
            <person name="Hunt C."/>
            <person name="Moore K."/>
            <person name="Hurst S.M."/>
            <person name="Lucas M."/>
            <person name="Rochet M."/>
            <person name="Gaillardin C."/>
            <person name="Tallada V.A."/>
            <person name="Garzon A."/>
            <person name="Thode G."/>
            <person name="Daga R.R."/>
            <person name="Cruzado L."/>
            <person name="Jimenez J."/>
            <person name="Sanchez M."/>
            <person name="del Rey F."/>
            <person name="Benito J."/>
            <person name="Dominguez A."/>
            <person name="Revuelta J.L."/>
            <person name="Moreno S."/>
            <person name="Armstrong J."/>
            <person name="Forsburg S.L."/>
            <person name="Cerutti L."/>
            <person name="Lowe T."/>
            <person name="McCombie W.R."/>
            <person name="Paulsen I."/>
            <person name="Potashkin J."/>
            <person name="Shpakovski G.V."/>
            <person name="Ussery D."/>
            <person name="Barrell B.G."/>
            <person name="Nurse P."/>
        </authorList>
    </citation>
    <scope>NUCLEOTIDE SEQUENCE [LARGE SCALE GENOMIC DNA]</scope>
    <source>
        <strain>972 / ATCC 24843</strain>
    </source>
</reference>
<keyword id="KW-0325">Glycoprotein</keyword>
<keyword id="KW-0472">Membrane</keyword>
<keyword id="KW-1185">Reference proteome</keyword>
<keyword id="KW-0812">Transmembrane</keyword>
<keyword id="KW-1133">Transmembrane helix</keyword>
<organism>
    <name type="scientific">Schizosaccharomyces pombe (strain 972 / ATCC 24843)</name>
    <name type="common">Fission yeast</name>
    <dbReference type="NCBI Taxonomy" id="284812"/>
    <lineage>
        <taxon>Eukaryota</taxon>
        <taxon>Fungi</taxon>
        <taxon>Dikarya</taxon>
        <taxon>Ascomycota</taxon>
        <taxon>Taphrinomycotina</taxon>
        <taxon>Schizosaccharomycetes</taxon>
        <taxon>Schizosaccharomycetales</taxon>
        <taxon>Schizosaccharomycetaceae</taxon>
        <taxon>Schizosaccharomyces</taxon>
    </lineage>
</organism>
<name>YD83_SCHPO</name>
<sequence>MSFFKKKLSKGKEILSKSNLKTHTSSNASLSIDDLNRFGFSLNPVLWCLDHQQGLLAIVSSTNRIYIYGKQHVQSVIVPDCSTIVHIALCAAYLIVIDSRNTVLSYPLMKHRDLSKPAATYFLKQKVTCTVTDPTIDWVFFGMSDGSVVPWDVTRHCLGKFKVPNLYVPRHEEWRMMGYSYAPVPGKLSPVVSVQIHPKDLGVILIAYPDGVVLYSIRTDEVIRFYELEYAPGSTAAVLSPHNYRRPIVKGIEWSPWGDHFVSYYTDSTFAFWDVDQEYPVQVRNFVDSNIHTYTPMQRNPPKTELEPIRSMRWCCCEDPTVSFILMLGGLPKEAPVKGISLFSYRNLPAKKDVETFAEFFANPNSQRFFPFIDIPPVRDMLVIPSSSPHYNGSHNPKNLLLLSEDNSLSLLDISTGNISNMSLSIPPSLCFLASDFRVIAFQTVTKKVWNQIEDTISVNSHYSCLFGGSPSPGYLKKLDERNLLITSTGLSLSIWDISQGFMNPSLCVNLDFSSVMRKHLTPSAFITTASFSTYNPEFSCADSFGRVIVCKRKNHKENLPAQLANGIYRLDDTLVLEGTLHAQYYIDLKRGRVTLNQMSNIGFVCIGYQDGGITIIDMRGPHILCNTSISELGLERRGKPDPDFLTSAEFVVMNPKGSPSSIYVVTGTYRGMTLLFRIDPSSSGRFSAYFESSRQLDIKNIYKICSLTQDGQIATATGSSLQSVGYPLPQEVFLVYIGDSGISVFNKINNQVGNLDWRKPVCCRAALVLSTVSKHMGSVVCVNSDLSVNWYSLPNLREERKMQLPLDIDKNRLKEGDILGNGDYIFPTLGAHELAFGCVLGSGRTLANLAPMMLITHNASHVPPRPSKSLWNWLLGEQSTSAEELDILLGGENRAESKVHTLETPKVISARPAESVKQPLTPVPSMTSQSAQSYIPPRRQQQQKGFFAQINDHLAQRGNMLGGIENTMDDLEEMSAEWANEIKDSLAGTKKDLILSGLKSYIP</sequence>